<name>RRAA_YERPG</name>
<feature type="chain" id="PRO_1000194882" description="Regulator of ribonuclease activity A">
    <location>
        <begin position="1"/>
        <end position="161"/>
    </location>
</feature>
<comment type="function">
    <text evidence="1">Globally modulates RNA abundance by binding to RNase E (Rne) and regulating its endonucleolytic activity. Can modulate Rne action in a substrate-dependent manner by altering the composition of the degradosome. Modulates RNA-binding and helicase activities of the degradosome.</text>
</comment>
<comment type="subunit">
    <text evidence="1">Homotrimer. Binds to both RNA-binding sites in the C-terminal region of Rne and to RhlB.</text>
</comment>
<comment type="subcellular location">
    <subcellularLocation>
        <location evidence="1">Cytoplasm</location>
    </subcellularLocation>
</comment>
<comment type="similarity">
    <text evidence="1">Belongs to the RraA family.</text>
</comment>
<evidence type="ECO:0000255" key="1">
    <source>
        <dbReference type="HAMAP-Rule" id="MF_00471"/>
    </source>
</evidence>
<protein>
    <recommendedName>
        <fullName evidence="1">Regulator of ribonuclease activity A</fullName>
    </recommendedName>
</protein>
<sequence>MKYDTSDLCDIYHEEVNVVEPLFSNFGGRTSFGGKITTVKCFEDNGLLFDLLEENGLGRVLVVDGGGSVRRALINAELAELALKNEWEGIVVYGAVRQVDDLAELDIGIQAMAAIPVGAADEGVGESDIRVNFGGVTFFSGDHLYADNTGIILSEDPLDIE</sequence>
<accession>A9R6C5</accession>
<organism>
    <name type="scientific">Yersinia pestis bv. Antiqua (strain Angola)</name>
    <dbReference type="NCBI Taxonomy" id="349746"/>
    <lineage>
        <taxon>Bacteria</taxon>
        <taxon>Pseudomonadati</taxon>
        <taxon>Pseudomonadota</taxon>
        <taxon>Gammaproteobacteria</taxon>
        <taxon>Enterobacterales</taxon>
        <taxon>Yersiniaceae</taxon>
        <taxon>Yersinia</taxon>
    </lineage>
</organism>
<keyword id="KW-0963">Cytoplasm</keyword>
<dbReference type="EMBL" id="CP000901">
    <property type="protein sequence ID" value="ABX85670.1"/>
    <property type="molecule type" value="Genomic_DNA"/>
</dbReference>
<dbReference type="RefSeq" id="WP_002208945.1">
    <property type="nucleotide sequence ID" value="NZ_CP009935.1"/>
</dbReference>
<dbReference type="SMR" id="A9R6C5"/>
<dbReference type="GeneID" id="57974491"/>
<dbReference type="KEGG" id="ypg:YpAngola_A0110"/>
<dbReference type="PATRIC" id="fig|349746.12.peg.1054"/>
<dbReference type="GO" id="GO:0005829">
    <property type="term" value="C:cytosol"/>
    <property type="evidence" value="ECO:0007669"/>
    <property type="project" value="TreeGrafter"/>
</dbReference>
<dbReference type="GO" id="GO:0060698">
    <property type="term" value="F:endoribonuclease inhibitor activity"/>
    <property type="evidence" value="ECO:0007669"/>
    <property type="project" value="UniProtKB-UniRule"/>
</dbReference>
<dbReference type="GO" id="GO:0019899">
    <property type="term" value="F:enzyme binding"/>
    <property type="evidence" value="ECO:0007669"/>
    <property type="project" value="UniProtKB-UniRule"/>
</dbReference>
<dbReference type="GO" id="GO:1902369">
    <property type="term" value="P:negative regulation of RNA catabolic process"/>
    <property type="evidence" value="ECO:0007669"/>
    <property type="project" value="TreeGrafter"/>
</dbReference>
<dbReference type="CDD" id="cd16841">
    <property type="entry name" value="RraA_family"/>
    <property type="match status" value="1"/>
</dbReference>
<dbReference type="Gene3D" id="3.50.30.40">
    <property type="entry name" value="Ribonuclease E inhibitor RraA/RraA-like"/>
    <property type="match status" value="1"/>
</dbReference>
<dbReference type="HAMAP" id="MF_00471">
    <property type="entry name" value="RraA"/>
    <property type="match status" value="1"/>
</dbReference>
<dbReference type="InterPro" id="IPR010203">
    <property type="entry name" value="RraA"/>
</dbReference>
<dbReference type="InterPro" id="IPR005493">
    <property type="entry name" value="RraA/RraA-like"/>
</dbReference>
<dbReference type="InterPro" id="IPR036704">
    <property type="entry name" value="RraA/RraA-like_sf"/>
</dbReference>
<dbReference type="InterPro" id="IPR014339">
    <property type="entry name" value="RraA_gpbac"/>
</dbReference>
<dbReference type="NCBIfam" id="TIGR01935">
    <property type="entry name" value="NOT-MenG"/>
    <property type="match status" value="1"/>
</dbReference>
<dbReference type="NCBIfam" id="NF006875">
    <property type="entry name" value="PRK09372.1"/>
    <property type="match status" value="1"/>
</dbReference>
<dbReference type="NCBIfam" id="TIGR02998">
    <property type="entry name" value="RraA_entero"/>
    <property type="match status" value="1"/>
</dbReference>
<dbReference type="PANTHER" id="PTHR33254">
    <property type="entry name" value="4-HYDROXY-4-METHYL-2-OXOGLUTARATE ALDOLASE 3-RELATED"/>
    <property type="match status" value="1"/>
</dbReference>
<dbReference type="PANTHER" id="PTHR33254:SF29">
    <property type="entry name" value="REGULATOR OF RIBONUCLEASE ACTIVITY A"/>
    <property type="match status" value="1"/>
</dbReference>
<dbReference type="Pfam" id="PF03737">
    <property type="entry name" value="RraA-like"/>
    <property type="match status" value="1"/>
</dbReference>
<dbReference type="SUPFAM" id="SSF89562">
    <property type="entry name" value="RraA-like"/>
    <property type="match status" value="1"/>
</dbReference>
<proteinExistence type="inferred from homology"/>
<gene>
    <name evidence="1" type="primary">rraA</name>
    <name type="ordered locus">YpAngola_A0110</name>
</gene>
<reference key="1">
    <citation type="journal article" date="2010" name="J. Bacteriol.">
        <title>Genome sequence of the deep-rooted Yersinia pestis strain Angola reveals new insights into the evolution and pangenome of the plague bacterium.</title>
        <authorList>
            <person name="Eppinger M."/>
            <person name="Worsham P.L."/>
            <person name="Nikolich M.P."/>
            <person name="Riley D.R."/>
            <person name="Sebastian Y."/>
            <person name="Mou S."/>
            <person name="Achtman M."/>
            <person name="Lindler L.E."/>
            <person name="Ravel J."/>
        </authorList>
    </citation>
    <scope>NUCLEOTIDE SEQUENCE [LARGE SCALE GENOMIC DNA]</scope>
    <source>
        <strain>Angola</strain>
    </source>
</reference>